<name>PUR7_LEPCP</name>
<proteinExistence type="inferred from homology"/>
<accession>B1XWZ1</accession>
<keyword id="KW-0067">ATP-binding</keyword>
<keyword id="KW-0436">Ligase</keyword>
<keyword id="KW-0547">Nucleotide-binding</keyword>
<keyword id="KW-0658">Purine biosynthesis</keyword>
<keyword id="KW-1185">Reference proteome</keyword>
<gene>
    <name evidence="1" type="primary">purC</name>
    <name type="ordered locus">Lcho_0362</name>
</gene>
<dbReference type="EC" id="6.3.2.6" evidence="1"/>
<dbReference type="EMBL" id="CP001013">
    <property type="protein sequence ID" value="ACB32637.1"/>
    <property type="molecule type" value="Genomic_DNA"/>
</dbReference>
<dbReference type="SMR" id="B1XWZ1"/>
<dbReference type="STRING" id="395495.Lcho_0362"/>
<dbReference type="KEGG" id="lch:Lcho_0362"/>
<dbReference type="eggNOG" id="COG0152">
    <property type="taxonomic scope" value="Bacteria"/>
</dbReference>
<dbReference type="HOGENOM" id="CLU_045637_0_0_4"/>
<dbReference type="UniPathway" id="UPA00074">
    <property type="reaction ID" value="UER00131"/>
</dbReference>
<dbReference type="Proteomes" id="UP000001693">
    <property type="component" value="Chromosome"/>
</dbReference>
<dbReference type="GO" id="GO:0005737">
    <property type="term" value="C:cytoplasm"/>
    <property type="evidence" value="ECO:0007669"/>
    <property type="project" value="TreeGrafter"/>
</dbReference>
<dbReference type="GO" id="GO:0005524">
    <property type="term" value="F:ATP binding"/>
    <property type="evidence" value="ECO:0007669"/>
    <property type="project" value="UniProtKB-KW"/>
</dbReference>
<dbReference type="GO" id="GO:0004639">
    <property type="term" value="F:phosphoribosylaminoimidazolesuccinocarboxamide synthase activity"/>
    <property type="evidence" value="ECO:0007669"/>
    <property type="project" value="UniProtKB-UniRule"/>
</dbReference>
<dbReference type="GO" id="GO:0006189">
    <property type="term" value="P:'de novo' IMP biosynthetic process"/>
    <property type="evidence" value="ECO:0007669"/>
    <property type="project" value="UniProtKB-UniRule"/>
</dbReference>
<dbReference type="CDD" id="cd01414">
    <property type="entry name" value="SAICAR_synt_Sc"/>
    <property type="match status" value="1"/>
</dbReference>
<dbReference type="FunFam" id="3.30.470.20:FF:000015">
    <property type="entry name" value="Phosphoribosylaminoimidazole-succinocarboxamide synthase"/>
    <property type="match status" value="1"/>
</dbReference>
<dbReference type="Gene3D" id="3.30.470.20">
    <property type="entry name" value="ATP-grasp fold, B domain"/>
    <property type="match status" value="1"/>
</dbReference>
<dbReference type="Gene3D" id="3.30.200.20">
    <property type="entry name" value="Phosphorylase Kinase, domain 1"/>
    <property type="match status" value="1"/>
</dbReference>
<dbReference type="HAMAP" id="MF_00137">
    <property type="entry name" value="SAICAR_synth"/>
    <property type="match status" value="1"/>
</dbReference>
<dbReference type="InterPro" id="IPR028923">
    <property type="entry name" value="SAICAR_synt/ADE2_N"/>
</dbReference>
<dbReference type="InterPro" id="IPR001636">
    <property type="entry name" value="SAICAR_synth"/>
</dbReference>
<dbReference type="InterPro" id="IPR018236">
    <property type="entry name" value="SAICAR_synthetase_CS"/>
</dbReference>
<dbReference type="NCBIfam" id="NF010568">
    <property type="entry name" value="PRK13961.1"/>
    <property type="match status" value="1"/>
</dbReference>
<dbReference type="NCBIfam" id="TIGR00081">
    <property type="entry name" value="purC"/>
    <property type="match status" value="1"/>
</dbReference>
<dbReference type="PANTHER" id="PTHR43700">
    <property type="entry name" value="PHOSPHORIBOSYLAMINOIMIDAZOLE-SUCCINOCARBOXAMIDE SYNTHASE"/>
    <property type="match status" value="1"/>
</dbReference>
<dbReference type="PANTHER" id="PTHR43700:SF1">
    <property type="entry name" value="PHOSPHORIBOSYLAMINOIMIDAZOLE-SUCCINOCARBOXAMIDE SYNTHASE"/>
    <property type="match status" value="1"/>
</dbReference>
<dbReference type="Pfam" id="PF01259">
    <property type="entry name" value="SAICAR_synt"/>
    <property type="match status" value="1"/>
</dbReference>
<dbReference type="SUPFAM" id="SSF56104">
    <property type="entry name" value="SAICAR synthase-like"/>
    <property type="match status" value="1"/>
</dbReference>
<dbReference type="PROSITE" id="PS01057">
    <property type="entry name" value="SAICAR_SYNTHETASE_1"/>
    <property type="match status" value="1"/>
</dbReference>
<dbReference type="PROSITE" id="PS01058">
    <property type="entry name" value="SAICAR_SYNTHETASE_2"/>
    <property type="match status" value="1"/>
</dbReference>
<comment type="catalytic activity">
    <reaction evidence="1">
        <text>5-amino-1-(5-phospho-D-ribosyl)imidazole-4-carboxylate + L-aspartate + ATP = (2S)-2-[5-amino-1-(5-phospho-beta-D-ribosyl)imidazole-4-carboxamido]succinate + ADP + phosphate + 2 H(+)</text>
        <dbReference type="Rhea" id="RHEA:22628"/>
        <dbReference type="ChEBI" id="CHEBI:15378"/>
        <dbReference type="ChEBI" id="CHEBI:29991"/>
        <dbReference type="ChEBI" id="CHEBI:30616"/>
        <dbReference type="ChEBI" id="CHEBI:43474"/>
        <dbReference type="ChEBI" id="CHEBI:58443"/>
        <dbReference type="ChEBI" id="CHEBI:77657"/>
        <dbReference type="ChEBI" id="CHEBI:456216"/>
        <dbReference type="EC" id="6.3.2.6"/>
    </reaction>
</comment>
<comment type="pathway">
    <text evidence="1">Purine metabolism; IMP biosynthesis via de novo pathway; 5-amino-1-(5-phospho-D-ribosyl)imidazole-4-carboxamide from 5-amino-1-(5-phospho-D-ribosyl)imidazole-4-carboxylate: step 1/2.</text>
</comment>
<comment type="similarity">
    <text evidence="1">Belongs to the SAICAR synthetase family.</text>
</comment>
<evidence type="ECO:0000255" key="1">
    <source>
        <dbReference type="HAMAP-Rule" id="MF_00137"/>
    </source>
</evidence>
<reference key="1">
    <citation type="submission" date="2008-03" db="EMBL/GenBank/DDBJ databases">
        <title>Complete sequence of Leptothrix cholodnii SP-6.</title>
        <authorList>
            <consortium name="US DOE Joint Genome Institute"/>
            <person name="Copeland A."/>
            <person name="Lucas S."/>
            <person name="Lapidus A."/>
            <person name="Glavina del Rio T."/>
            <person name="Dalin E."/>
            <person name="Tice H."/>
            <person name="Bruce D."/>
            <person name="Goodwin L."/>
            <person name="Pitluck S."/>
            <person name="Chertkov O."/>
            <person name="Brettin T."/>
            <person name="Detter J.C."/>
            <person name="Han C."/>
            <person name="Kuske C.R."/>
            <person name="Schmutz J."/>
            <person name="Larimer F."/>
            <person name="Land M."/>
            <person name="Hauser L."/>
            <person name="Kyrpides N."/>
            <person name="Lykidis A."/>
            <person name="Emerson D."/>
            <person name="Richardson P."/>
        </authorList>
    </citation>
    <scope>NUCLEOTIDE SEQUENCE [LARGE SCALE GENOMIC DNA]</scope>
    <source>
        <strain>ATCC 51168 / LMG 8142 / SP-6</strain>
    </source>
</reference>
<protein>
    <recommendedName>
        <fullName evidence="1">Phosphoribosylaminoimidazole-succinocarboxamide synthase</fullName>
        <ecNumber evidence="1">6.3.2.6</ecNumber>
    </recommendedName>
    <alternativeName>
        <fullName evidence="1">SAICAR synthetase</fullName>
    </alternativeName>
</protein>
<feature type="chain" id="PRO_1000117837" description="Phosphoribosylaminoimidazole-succinocarboxamide synthase">
    <location>
        <begin position="1"/>
        <end position="302"/>
    </location>
</feature>
<organism>
    <name type="scientific">Leptothrix cholodnii (strain ATCC 51168 / LMG 8142 / SP-6)</name>
    <name type="common">Leptothrix discophora (strain SP-6)</name>
    <dbReference type="NCBI Taxonomy" id="395495"/>
    <lineage>
        <taxon>Bacteria</taxon>
        <taxon>Pseudomonadati</taxon>
        <taxon>Pseudomonadota</taxon>
        <taxon>Betaproteobacteria</taxon>
        <taxon>Burkholderiales</taxon>
        <taxon>Sphaerotilaceae</taxon>
        <taxon>Leptothrix</taxon>
    </lineage>
</organism>
<sequence length="302" mass="33181">MTAALLESQLHSLPLLARGKVRDNYAVGTDRILMVASDRLSAFDVIMGEGIPGKGELLTRVALYWFDRLGHIVPNHLTGADPVSVVAPDEVDQVRGRSMLVKRLKPLPVEAVVRGYLAGSGWKEYQETRSVCGVALPSGLTNAARLPAPIFTPATKAEMGDHDINISFERMSEIIGADLAERVRAISIQLYSSAAEIALSKGIIIADTKFEFGLDEDGTLTLMDEVLTPDSSRYWPIEHYQSAYAQGRNPPSFDKQFVRDWLESVRIDGQPWNKQAPAPALPDDVIVHTAATYREALERLTA</sequence>